<feature type="chain" id="PRO_1000018868" description="Bifunctional purine biosynthesis protein PurH">
    <location>
        <begin position="1"/>
        <end position="510"/>
    </location>
</feature>
<feature type="domain" description="MGS-like" evidence="2">
    <location>
        <begin position="1"/>
        <end position="142"/>
    </location>
</feature>
<proteinExistence type="inferred from homology"/>
<name>PUR9_CAMC5</name>
<organism>
    <name type="scientific">Campylobacter curvus (strain 525.92)</name>
    <dbReference type="NCBI Taxonomy" id="360105"/>
    <lineage>
        <taxon>Bacteria</taxon>
        <taxon>Pseudomonadati</taxon>
        <taxon>Campylobacterota</taxon>
        <taxon>Epsilonproteobacteria</taxon>
        <taxon>Campylobacterales</taxon>
        <taxon>Campylobacteraceae</taxon>
        <taxon>Campylobacter</taxon>
    </lineage>
</organism>
<evidence type="ECO:0000255" key="1">
    <source>
        <dbReference type="HAMAP-Rule" id="MF_00139"/>
    </source>
</evidence>
<evidence type="ECO:0000255" key="2">
    <source>
        <dbReference type="PROSITE-ProRule" id="PRU01202"/>
    </source>
</evidence>
<reference key="1">
    <citation type="submission" date="2007-07" db="EMBL/GenBank/DDBJ databases">
        <title>Genome sequence of Campylobacter curvus 525.92 isolated from human feces.</title>
        <authorList>
            <person name="Fouts D.E."/>
            <person name="Mongodin E.F."/>
            <person name="Puiu D."/>
            <person name="Sebastian Y."/>
            <person name="Miller W.G."/>
            <person name="Mandrell R.E."/>
            <person name="Lastovica A.J."/>
            <person name="Nelson K.E."/>
        </authorList>
    </citation>
    <scope>NUCLEOTIDE SEQUENCE [LARGE SCALE GENOMIC DNA]</scope>
    <source>
        <strain>525.92</strain>
    </source>
</reference>
<gene>
    <name evidence="1" type="primary">purH</name>
    <name type="ordered locus">Ccur92_11240</name>
    <name type="ORF">CCV52592_1838</name>
</gene>
<dbReference type="EC" id="2.1.2.3" evidence="1"/>
<dbReference type="EC" id="3.5.4.10" evidence="1"/>
<dbReference type="EMBL" id="CP000767">
    <property type="protein sequence ID" value="EAU00271.1"/>
    <property type="molecule type" value="Genomic_DNA"/>
</dbReference>
<dbReference type="RefSeq" id="WP_009651242.1">
    <property type="nucleotide sequence ID" value="NC_009715.2"/>
</dbReference>
<dbReference type="SMR" id="A7GYY6"/>
<dbReference type="STRING" id="360105.CCV52592_1838"/>
<dbReference type="KEGG" id="ccv:CCV52592_1838"/>
<dbReference type="HOGENOM" id="CLU_016316_5_2_7"/>
<dbReference type="OrthoDB" id="9802065at2"/>
<dbReference type="UniPathway" id="UPA00074">
    <property type="reaction ID" value="UER00133"/>
</dbReference>
<dbReference type="UniPathway" id="UPA00074">
    <property type="reaction ID" value="UER00135"/>
</dbReference>
<dbReference type="Proteomes" id="UP000006380">
    <property type="component" value="Chromosome"/>
</dbReference>
<dbReference type="GO" id="GO:0005829">
    <property type="term" value="C:cytosol"/>
    <property type="evidence" value="ECO:0007669"/>
    <property type="project" value="TreeGrafter"/>
</dbReference>
<dbReference type="GO" id="GO:0003937">
    <property type="term" value="F:IMP cyclohydrolase activity"/>
    <property type="evidence" value="ECO:0007669"/>
    <property type="project" value="UniProtKB-UniRule"/>
</dbReference>
<dbReference type="GO" id="GO:0004643">
    <property type="term" value="F:phosphoribosylaminoimidazolecarboxamide formyltransferase activity"/>
    <property type="evidence" value="ECO:0007669"/>
    <property type="project" value="UniProtKB-UniRule"/>
</dbReference>
<dbReference type="GO" id="GO:0006189">
    <property type="term" value="P:'de novo' IMP biosynthetic process"/>
    <property type="evidence" value="ECO:0007669"/>
    <property type="project" value="UniProtKB-UniRule"/>
</dbReference>
<dbReference type="CDD" id="cd01421">
    <property type="entry name" value="IMPCH"/>
    <property type="match status" value="1"/>
</dbReference>
<dbReference type="FunFam" id="3.40.140.20:FF:000001">
    <property type="entry name" value="Bifunctional purine biosynthesis protein PurH"/>
    <property type="match status" value="1"/>
</dbReference>
<dbReference type="FunFam" id="3.40.50.1380:FF:000001">
    <property type="entry name" value="Bifunctional purine biosynthesis protein PurH"/>
    <property type="match status" value="1"/>
</dbReference>
<dbReference type="Gene3D" id="3.40.140.20">
    <property type="match status" value="2"/>
</dbReference>
<dbReference type="Gene3D" id="3.40.50.1380">
    <property type="entry name" value="Methylglyoxal synthase-like domain"/>
    <property type="match status" value="1"/>
</dbReference>
<dbReference type="HAMAP" id="MF_00139">
    <property type="entry name" value="PurH"/>
    <property type="match status" value="1"/>
</dbReference>
<dbReference type="InterPro" id="IPR024051">
    <property type="entry name" value="AICAR_Tfase_dup_dom_sf"/>
</dbReference>
<dbReference type="InterPro" id="IPR016193">
    <property type="entry name" value="Cytidine_deaminase-like"/>
</dbReference>
<dbReference type="InterPro" id="IPR011607">
    <property type="entry name" value="MGS-like_dom"/>
</dbReference>
<dbReference type="InterPro" id="IPR036914">
    <property type="entry name" value="MGS-like_dom_sf"/>
</dbReference>
<dbReference type="InterPro" id="IPR002695">
    <property type="entry name" value="PurH-like"/>
</dbReference>
<dbReference type="NCBIfam" id="NF002049">
    <property type="entry name" value="PRK00881.1"/>
    <property type="match status" value="1"/>
</dbReference>
<dbReference type="NCBIfam" id="TIGR00355">
    <property type="entry name" value="purH"/>
    <property type="match status" value="1"/>
</dbReference>
<dbReference type="PANTHER" id="PTHR11692:SF0">
    <property type="entry name" value="BIFUNCTIONAL PURINE BIOSYNTHESIS PROTEIN ATIC"/>
    <property type="match status" value="1"/>
</dbReference>
<dbReference type="PANTHER" id="PTHR11692">
    <property type="entry name" value="BIFUNCTIONAL PURINE BIOSYNTHESIS PROTEIN PURH"/>
    <property type="match status" value="1"/>
</dbReference>
<dbReference type="Pfam" id="PF01808">
    <property type="entry name" value="AICARFT_IMPCHas"/>
    <property type="match status" value="1"/>
</dbReference>
<dbReference type="Pfam" id="PF02142">
    <property type="entry name" value="MGS"/>
    <property type="match status" value="1"/>
</dbReference>
<dbReference type="PIRSF" id="PIRSF000414">
    <property type="entry name" value="AICARFT_IMPCHas"/>
    <property type="match status" value="1"/>
</dbReference>
<dbReference type="SMART" id="SM00798">
    <property type="entry name" value="AICARFT_IMPCHas"/>
    <property type="match status" value="1"/>
</dbReference>
<dbReference type="SMART" id="SM00851">
    <property type="entry name" value="MGS"/>
    <property type="match status" value="1"/>
</dbReference>
<dbReference type="SUPFAM" id="SSF53927">
    <property type="entry name" value="Cytidine deaminase-like"/>
    <property type="match status" value="1"/>
</dbReference>
<dbReference type="SUPFAM" id="SSF52335">
    <property type="entry name" value="Methylglyoxal synthase-like"/>
    <property type="match status" value="1"/>
</dbReference>
<dbReference type="PROSITE" id="PS51855">
    <property type="entry name" value="MGS"/>
    <property type="match status" value="1"/>
</dbReference>
<protein>
    <recommendedName>
        <fullName evidence="1">Bifunctional purine biosynthesis protein PurH</fullName>
    </recommendedName>
    <domain>
        <recommendedName>
            <fullName evidence="1">Phosphoribosylaminoimidazolecarboxamide formyltransferase</fullName>
            <ecNumber evidence="1">2.1.2.3</ecNumber>
        </recommendedName>
        <alternativeName>
            <fullName evidence="1">AICAR transformylase</fullName>
        </alternativeName>
    </domain>
    <domain>
        <recommendedName>
            <fullName evidence="1">IMP cyclohydrolase</fullName>
            <ecNumber evidence="1">3.5.4.10</ecNumber>
        </recommendedName>
        <alternativeName>
            <fullName evidence="1">ATIC</fullName>
        </alternativeName>
        <alternativeName>
            <fullName evidence="1">IMP synthase</fullName>
        </alternativeName>
        <alternativeName>
            <fullName evidence="1">Inosinicase</fullName>
        </alternativeName>
    </domain>
</protein>
<comment type="catalytic activity">
    <reaction evidence="1">
        <text>(6R)-10-formyltetrahydrofolate + 5-amino-1-(5-phospho-beta-D-ribosyl)imidazole-4-carboxamide = 5-formamido-1-(5-phospho-D-ribosyl)imidazole-4-carboxamide + (6S)-5,6,7,8-tetrahydrofolate</text>
        <dbReference type="Rhea" id="RHEA:22192"/>
        <dbReference type="ChEBI" id="CHEBI:57453"/>
        <dbReference type="ChEBI" id="CHEBI:58467"/>
        <dbReference type="ChEBI" id="CHEBI:58475"/>
        <dbReference type="ChEBI" id="CHEBI:195366"/>
        <dbReference type="EC" id="2.1.2.3"/>
    </reaction>
</comment>
<comment type="catalytic activity">
    <reaction evidence="1">
        <text>IMP + H2O = 5-formamido-1-(5-phospho-D-ribosyl)imidazole-4-carboxamide</text>
        <dbReference type="Rhea" id="RHEA:18445"/>
        <dbReference type="ChEBI" id="CHEBI:15377"/>
        <dbReference type="ChEBI" id="CHEBI:58053"/>
        <dbReference type="ChEBI" id="CHEBI:58467"/>
        <dbReference type="EC" id="3.5.4.10"/>
    </reaction>
</comment>
<comment type="pathway">
    <text evidence="1">Purine metabolism; IMP biosynthesis via de novo pathway; 5-formamido-1-(5-phospho-D-ribosyl)imidazole-4-carboxamide from 5-amino-1-(5-phospho-D-ribosyl)imidazole-4-carboxamide (10-formyl THF route): step 1/1.</text>
</comment>
<comment type="pathway">
    <text evidence="1">Purine metabolism; IMP biosynthesis via de novo pathway; IMP from 5-formamido-1-(5-phospho-D-ribosyl)imidazole-4-carboxamide: step 1/1.</text>
</comment>
<comment type="domain">
    <text evidence="1">The IMP cyclohydrolase activity resides in the N-terminal region.</text>
</comment>
<comment type="similarity">
    <text evidence="1">Belongs to the PurH family.</text>
</comment>
<sequence>MRALISVSDKEGVVEFAKGLEQLGWQIVSTGGTYKILNENGVKAVEVAQITQSPEMFEGRVKTLHPKIHGGILYKRDDASHVAQAKEFGIEGIDLVCVNLYPFKETTIRTDDFDEIIENIDIGGPAMVRSAAKNFKDVLIVTSVLDYDEILQRLKEGTDDLEFRRNLMIKAYEHTASYDATIANYMNERFKGGFGDARFIFGNKVFDTRYGENPHQKGALYEFEYFFTNNFRALKGEASFNNMTDINGAVMLATSFENAPVVAIVKHSNPCGLAVKDSLLESYVEALKCDPISAYGGVVAINGTLDRALARKINEIYVEVIIAANVDDDALAVFENKKRIKIFTQDNKFLVRAGDKFDFKHIDGGFVFQERDVVSDDELKNMKQMSKKHANENQLKDAQIAWKVAALTKSNCVVYVKDGAMVAIGMGMTSRVDAARAAVAKAKELDLDLHGCVLASEAFFPFRDSIDIASKVGVKCVIEPGGSIRDDEVIEAANEHGMSLYFTGVRHFLH</sequence>
<keyword id="KW-0378">Hydrolase</keyword>
<keyword id="KW-0511">Multifunctional enzyme</keyword>
<keyword id="KW-0658">Purine biosynthesis</keyword>
<keyword id="KW-1185">Reference proteome</keyword>
<keyword id="KW-0808">Transferase</keyword>
<accession>A7GYY6</accession>